<feature type="chain" id="PRO_0000366362" description="Eukaryotic translation initiation factor 3 subunit A">
    <location>
        <begin position="1"/>
        <end position="1035"/>
    </location>
</feature>
<feature type="domain" description="PCI" evidence="2">
    <location>
        <begin position="339"/>
        <end position="523"/>
    </location>
</feature>
<feature type="region of interest" description="Disordered" evidence="3">
    <location>
        <begin position="619"/>
        <end position="649"/>
    </location>
</feature>
<feature type="region of interest" description="Disordered" evidence="3">
    <location>
        <begin position="809"/>
        <end position="1035"/>
    </location>
</feature>
<feature type="coiled-coil region" evidence="1">
    <location>
        <begin position="92"/>
        <end position="121"/>
    </location>
</feature>
<feature type="coiled-coil region" evidence="1">
    <location>
        <begin position="606"/>
        <end position="910"/>
    </location>
</feature>
<feature type="compositionally biased region" description="Basic and acidic residues" evidence="3">
    <location>
        <begin position="619"/>
        <end position="632"/>
    </location>
</feature>
<feature type="compositionally biased region" description="Basic and acidic residues" evidence="3">
    <location>
        <begin position="809"/>
        <end position="901"/>
    </location>
</feature>
<feature type="compositionally biased region" description="Low complexity" evidence="3">
    <location>
        <begin position="943"/>
        <end position="953"/>
    </location>
</feature>
<feature type="compositionally biased region" description="Low complexity" evidence="3">
    <location>
        <begin position="988"/>
        <end position="1004"/>
    </location>
</feature>
<comment type="function">
    <text evidence="1">RNA-binding component of the eukaryotic translation initiation factor 3 (eIF-3) complex, which is involved in protein synthesis of a specialized repertoire of mRNAs and, together with other initiation factors, stimulates binding of mRNA and methionyl-tRNAi to the 40S ribosome. The eIF-3 complex specifically targets and initiates translation of a subset of mRNAs involved in cell proliferation.</text>
</comment>
<comment type="subunit">
    <text evidence="1">Component of the eukaryotic translation initiation factor 3 (eIF-3) complex.</text>
</comment>
<comment type="subcellular location">
    <subcellularLocation>
        <location evidence="1">Cytoplasm</location>
    </subcellularLocation>
</comment>
<comment type="similarity">
    <text evidence="1">Belongs to the eIF-3 subunit A family.</text>
</comment>
<comment type="sequence caution" evidence="4">
    <conflict type="erroneous gene model prediction">
        <sequence resource="EMBL-CDS" id="EAA63177"/>
    </conflict>
</comment>
<name>EIF3A_EMENI</name>
<reference key="1">
    <citation type="journal article" date="2005" name="Nature">
        <title>Sequencing of Aspergillus nidulans and comparative analysis with A. fumigatus and A. oryzae.</title>
        <authorList>
            <person name="Galagan J.E."/>
            <person name="Calvo S.E."/>
            <person name="Cuomo C."/>
            <person name="Ma L.-J."/>
            <person name="Wortman J.R."/>
            <person name="Batzoglou S."/>
            <person name="Lee S.-I."/>
            <person name="Bastuerkmen M."/>
            <person name="Spevak C.C."/>
            <person name="Clutterbuck J."/>
            <person name="Kapitonov V."/>
            <person name="Jurka J."/>
            <person name="Scazzocchio C."/>
            <person name="Farman M.L."/>
            <person name="Butler J."/>
            <person name="Purcell S."/>
            <person name="Harris S."/>
            <person name="Braus G.H."/>
            <person name="Draht O."/>
            <person name="Busch S."/>
            <person name="D'Enfert C."/>
            <person name="Bouchier C."/>
            <person name="Goldman G.H."/>
            <person name="Bell-Pedersen D."/>
            <person name="Griffiths-Jones S."/>
            <person name="Doonan J.H."/>
            <person name="Yu J."/>
            <person name="Vienken K."/>
            <person name="Pain A."/>
            <person name="Freitag M."/>
            <person name="Selker E.U."/>
            <person name="Archer D.B."/>
            <person name="Penalva M.A."/>
            <person name="Oakley B.R."/>
            <person name="Momany M."/>
            <person name="Tanaka T."/>
            <person name="Kumagai T."/>
            <person name="Asai K."/>
            <person name="Machida M."/>
            <person name="Nierman W.C."/>
            <person name="Denning D.W."/>
            <person name="Caddick M.X."/>
            <person name="Hynes M."/>
            <person name="Paoletti M."/>
            <person name="Fischer R."/>
            <person name="Miller B.L."/>
            <person name="Dyer P.S."/>
            <person name="Sachs M.S."/>
            <person name="Osmani S.A."/>
            <person name="Birren B.W."/>
        </authorList>
    </citation>
    <scope>NUCLEOTIDE SEQUENCE [LARGE SCALE GENOMIC DNA]</scope>
    <source>
        <strain>FGSC A4 / ATCC 38163 / CBS 112.46 / NRRL 194 / M139</strain>
    </source>
</reference>
<reference key="2">
    <citation type="journal article" date="2009" name="Fungal Genet. Biol.">
        <title>The 2008 update of the Aspergillus nidulans genome annotation: a community effort.</title>
        <authorList>
            <person name="Wortman J.R."/>
            <person name="Gilsenan J.M."/>
            <person name="Joardar V."/>
            <person name="Deegan J."/>
            <person name="Clutterbuck J."/>
            <person name="Andersen M.R."/>
            <person name="Archer D."/>
            <person name="Bencina M."/>
            <person name="Braus G."/>
            <person name="Coutinho P."/>
            <person name="von Dohren H."/>
            <person name="Doonan J."/>
            <person name="Driessen A.J."/>
            <person name="Durek P."/>
            <person name="Espeso E."/>
            <person name="Fekete E."/>
            <person name="Flipphi M."/>
            <person name="Estrada C.G."/>
            <person name="Geysens S."/>
            <person name="Goldman G."/>
            <person name="de Groot P.W."/>
            <person name="Hansen K."/>
            <person name="Harris S.D."/>
            <person name="Heinekamp T."/>
            <person name="Helmstaedt K."/>
            <person name="Henrissat B."/>
            <person name="Hofmann G."/>
            <person name="Homan T."/>
            <person name="Horio T."/>
            <person name="Horiuchi H."/>
            <person name="James S."/>
            <person name="Jones M."/>
            <person name="Karaffa L."/>
            <person name="Karanyi Z."/>
            <person name="Kato M."/>
            <person name="Keller N."/>
            <person name="Kelly D.E."/>
            <person name="Kiel J.A."/>
            <person name="Kim J.M."/>
            <person name="van der Klei I.J."/>
            <person name="Klis F.M."/>
            <person name="Kovalchuk A."/>
            <person name="Krasevec N."/>
            <person name="Kubicek C.P."/>
            <person name="Liu B."/>
            <person name="Maccabe A."/>
            <person name="Meyer V."/>
            <person name="Mirabito P."/>
            <person name="Miskei M."/>
            <person name="Mos M."/>
            <person name="Mullins J."/>
            <person name="Nelson D.R."/>
            <person name="Nielsen J."/>
            <person name="Oakley B.R."/>
            <person name="Osmani S.A."/>
            <person name="Pakula T."/>
            <person name="Paszewski A."/>
            <person name="Paulsen I."/>
            <person name="Pilsyk S."/>
            <person name="Pocsi I."/>
            <person name="Punt P.J."/>
            <person name="Ram A.F."/>
            <person name="Ren Q."/>
            <person name="Robellet X."/>
            <person name="Robson G."/>
            <person name="Seiboth B."/>
            <person name="van Solingen P."/>
            <person name="Specht T."/>
            <person name="Sun J."/>
            <person name="Taheri-Talesh N."/>
            <person name="Takeshita N."/>
            <person name="Ussery D."/>
            <person name="vanKuyk P.A."/>
            <person name="Visser H."/>
            <person name="van de Vondervoort P.J."/>
            <person name="de Vries R.P."/>
            <person name="Walton J."/>
            <person name="Xiang X."/>
            <person name="Xiong Y."/>
            <person name="Zeng A.P."/>
            <person name="Brandt B.W."/>
            <person name="Cornell M.J."/>
            <person name="van den Hondel C.A."/>
            <person name="Visser J."/>
            <person name="Oliver S.G."/>
            <person name="Turner G."/>
        </authorList>
    </citation>
    <scope>GENOME REANNOTATION</scope>
    <source>
        <strain>FGSC A4 / ATCC 38163 / CBS 112.46 / NRRL 194 / M139</strain>
    </source>
</reference>
<sequence length="1035" mass="118338">MPPPPHIKPENVLKRAQELIAVGQAPAALTVLHEHATSKRTRSSPIASLEPVMLLFVELCVDLRKGKAAKDGLYQYKNIAQNSNVGTIEIVLKKFIELAEKKVTEAQAKADEIQSSLESAAPSSNVEDLEAIETPETILLATVSGEQSRDRTDRAVVTPWLKFLWETYRTVLEILKNNARLEIMYQTTALQAFQFCLKYTRKTEFRRLCELLRNHVQNAAKYSAQMHAINLSDPDTLQRHLDTRFQQLNVAVELELWQEAFRSIEDIHTLLSLSKRPAKNVMMANYYEKLARIFLVSENYLFHAAAWSRYYNLLRQSAVTLSTNQGSKKDHPSVTEADMTKAASFVLLSALAIPVISTSRSRGALIDVDEVRKNKNTRLTNLLGMLQSPTRAVLFRDALNKGLLKRVRPEIRELYNILEVDFHPLSICKKVTPILKKIGDDPEMEKYVVPLQQVILTRLFQQLSQVYESVELKFVYELAQFPDPFQITPSMIEKFIMNGCKKGDLAIRVDHISGVLTFDTDVFSSAKALHSGSAAGSAESELGSVQRLQNTPAEIARLQLTRLAKTLHVTCMYVDPSYNDSRLQAKQAALTRAAAGAAKEHEDTLERRVIIEKKKEAATDALQRKQKEEETRKRIRTQQLQEAEKQRLAEEQRERELKRIKDEQDRIRQQELKKQLEELKSGVKGIDLNEIDLEDLDANRLRAIKLAQLEKEKNELTERVRATGKRIDHLERAFRREELKHIAEDYEAQKKVDMEIYERQKAQTLAEAEAKHKEAVALKHRLSRLIPVFSSFRKEVSEKRHEEFEKRRKAAEREFEAKKKQRVKEVQERRRREKIERENAERAKREEEERIKREEEERAARDAERRRILAEEKAKREEERAKMDEIAAKQRQREEEAEARLRAKRAGLSEPPRTESEVRTAPRLNIAPRTSGGPSWRERQAAKEAAGGAAPEAPKAEPEPPRRTGGYVPPHARGGSDAAPPAGNRYVPPSQRSSQPPSRTQTPPTSSPKPEEPKPLASGTGGKWVPRWKQQQQNQ</sequence>
<evidence type="ECO:0000255" key="1">
    <source>
        <dbReference type="HAMAP-Rule" id="MF_03000"/>
    </source>
</evidence>
<evidence type="ECO:0000255" key="2">
    <source>
        <dbReference type="PROSITE-ProRule" id="PRU01185"/>
    </source>
</evidence>
<evidence type="ECO:0000256" key="3">
    <source>
        <dbReference type="SAM" id="MobiDB-lite"/>
    </source>
</evidence>
<evidence type="ECO:0000305" key="4"/>
<keyword id="KW-0175">Coiled coil</keyword>
<keyword id="KW-0963">Cytoplasm</keyword>
<keyword id="KW-0396">Initiation factor</keyword>
<keyword id="KW-0648">Protein biosynthesis</keyword>
<keyword id="KW-1185">Reference proteome</keyword>
<keyword id="KW-0694">RNA-binding</keyword>
<proteinExistence type="inferred from homology"/>
<accession>Q5B9N7</accession>
<accession>C8VJY2</accession>
<gene>
    <name type="primary">tif32</name>
    <name type="ORF">AN2743</name>
</gene>
<protein>
    <recommendedName>
        <fullName evidence="1">Eukaryotic translation initiation factor 3 subunit A</fullName>
        <shortName evidence="1">eIF3a</shortName>
    </recommendedName>
    <alternativeName>
        <fullName evidence="1">Eukaryotic translation initiation factor 3 110 kDa subunit homolog</fullName>
        <shortName evidence="1">eIF3 p110</shortName>
    </alternativeName>
    <alternativeName>
        <fullName evidence="1">Translation initiation factor eIF3, p110 subunit homolog</fullName>
    </alternativeName>
</protein>
<dbReference type="EMBL" id="AACD01000049">
    <property type="protein sequence ID" value="EAA63177.1"/>
    <property type="status" value="ALT_SEQ"/>
    <property type="molecule type" value="Genomic_DNA"/>
</dbReference>
<dbReference type="EMBL" id="BN001306">
    <property type="protein sequence ID" value="CBF84105.1"/>
    <property type="molecule type" value="Genomic_DNA"/>
</dbReference>
<dbReference type="RefSeq" id="XP_660347.1">
    <property type="nucleotide sequence ID" value="XM_655255.1"/>
</dbReference>
<dbReference type="SMR" id="Q5B9N7"/>
<dbReference type="FunCoup" id="Q5B9N7">
    <property type="interactions" value="1265"/>
</dbReference>
<dbReference type="STRING" id="227321.Q5B9N7"/>
<dbReference type="EnsemblFungi" id="CBF84105">
    <property type="protein sequence ID" value="CBF84105"/>
    <property type="gene ID" value="ANIA_02743"/>
</dbReference>
<dbReference type="VEuPathDB" id="FungiDB:AN2743"/>
<dbReference type="eggNOG" id="KOG2072">
    <property type="taxonomic scope" value="Eukaryota"/>
</dbReference>
<dbReference type="HOGENOM" id="CLU_002096_2_1_1"/>
<dbReference type="InParanoid" id="Q5B9N7"/>
<dbReference type="OMA" id="EHITNKR"/>
<dbReference type="OrthoDB" id="18884at2759"/>
<dbReference type="Proteomes" id="UP000000560">
    <property type="component" value="Chromosome VI"/>
</dbReference>
<dbReference type="GO" id="GO:0010494">
    <property type="term" value="C:cytoplasmic stress granule"/>
    <property type="evidence" value="ECO:0007669"/>
    <property type="project" value="EnsemblFungi"/>
</dbReference>
<dbReference type="GO" id="GO:0016282">
    <property type="term" value="C:eukaryotic 43S preinitiation complex"/>
    <property type="evidence" value="ECO:0007669"/>
    <property type="project" value="UniProtKB-UniRule"/>
</dbReference>
<dbReference type="GO" id="GO:0033290">
    <property type="term" value="C:eukaryotic 48S preinitiation complex"/>
    <property type="evidence" value="ECO:0007669"/>
    <property type="project" value="UniProtKB-UniRule"/>
</dbReference>
<dbReference type="GO" id="GO:0071540">
    <property type="term" value="C:eukaryotic translation initiation factor 3 complex, eIF3e"/>
    <property type="evidence" value="ECO:0000318"/>
    <property type="project" value="GO_Central"/>
</dbReference>
<dbReference type="GO" id="GO:0071541">
    <property type="term" value="C:eukaryotic translation initiation factor 3 complex, eIF3m"/>
    <property type="evidence" value="ECO:0000318"/>
    <property type="project" value="GO_Central"/>
</dbReference>
<dbReference type="GO" id="GO:0043614">
    <property type="term" value="C:multi-eIF complex"/>
    <property type="evidence" value="ECO:0000318"/>
    <property type="project" value="GO_Central"/>
</dbReference>
<dbReference type="GO" id="GO:0003729">
    <property type="term" value="F:mRNA binding"/>
    <property type="evidence" value="ECO:0000318"/>
    <property type="project" value="GO_Central"/>
</dbReference>
<dbReference type="GO" id="GO:0003743">
    <property type="term" value="F:translation initiation factor activity"/>
    <property type="evidence" value="ECO:0007669"/>
    <property type="project" value="UniProtKB-UniRule"/>
</dbReference>
<dbReference type="GO" id="GO:0001732">
    <property type="term" value="P:formation of cytoplasmic translation initiation complex"/>
    <property type="evidence" value="ECO:0000318"/>
    <property type="project" value="GO_Central"/>
</dbReference>
<dbReference type="GO" id="GO:0002188">
    <property type="term" value="P:translation reinitiation"/>
    <property type="evidence" value="ECO:0000318"/>
    <property type="project" value="GO_Central"/>
</dbReference>
<dbReference type="FunFam" id="1.25.40.860:FF:000003">
    <property type="entry name" value="Eukaryotic translation initiation factor 3 subunit A"/>
    <property type="match status" value="1"/>
</dbReference>
<dbReference type="FunFam" id="4.10.860.10:FF:000001">
    <property type="entry name" value="Eukaryotic translation initiation factor 3 subunit A"/>
    <property type="match status" value="1"/>
</dbReference>
<dbReference type="Gene3D" id="1.25.40.860">
    <property type="match status" value="2"/>
</dbReference>
<dbReference type="Gene3D" id="4.10.860.10">
    <property type="entry name" value="UVR domain"/>
    <property type="match status" value="1"/>
</dbReference>
<dbReference type="HAMAP" id="MF_03000">
    <property type="entry name" value="eIF3a"/>
    <property type="match status" value="1"/>
</dbReference>
<dbReference type="InterPro" id="IPR027512">
    <property type="entry name" value="EIF3A"/>
</dbReference>
<dbReference type="InterPro" id="IPR054711">
    <property type="entry name" value="eIF3a_PCI_TPR-like"/>
</dbReference>
<dbReference type="InterPro" id="IPR000717">
    <property type="entry name" value="PCI_dom"/>
</dbReference>
<dbReference type="PANTHER" id="PTHR14005:SF0">
    <property type="entry name" value="EUKARYOTIC TRANSLATION INITIATION FACTOR 3 SUBUNIT A"/>
    <property type="match status" value="1"/>
</dbReference>
<dbReference type="PANTHER" id="PTHR14005">
    <property type="entry name" value="EUKARYOTIC TRANSLATION INITIATION FACTOR 3, THETA SUBUNIT"/>
    <property type="match status" value="1"/>
</dbReference>
<dbReference type="Pfam" id="PF22591">
    <property type="entry name" value="eIF3a_PCI_TPR-like"/>
    <property type="match status" value="1"/>
</dbReference>
<dbReference type="Pfam" id="PF01399">
    <property type="entry name" value="PCI"/>
    <property type="match status" value="1"/>
</dbReference>
<dbReference type="SMART" id="SM00088">
    <property type="entry name" value="PINT"/>
    <property type="match status" value="1"/>
</dbReference>
<dbReference type="PROSITE" id="PS50250">
    <property type="entry name" value="PCI"/>
    <property type="match status" value="1"/>
</dbReference>
<organism>
    <name type="scientific">Emericella nidulans (strain FGSC A4 / ATCC 38163 / CBS 112.46 / NRRL 194 / M139)</name>
    <name type="common">Aspergillus nidulans</name>
    <dbReference type="NCBI Taxonomy" id="227321"/>
    <lineage>
        <taxon>Eukaryota</taxon>
        <taxon>Fungi</taxon>
        <taxon>Dikarya</taxon>
        <taxon>Ascomycota</taxon>
        <taxon>Pezizomycotina</taxon>
        <taxon>Eurotiomycetes</taxon>
        <taxon>Eurotiomycetidae</taxon>
        <taxon>Eurotiales</taxon>
        <taxon>Aspergillaceae</taxon>
        <taxon>Aspergillus</taxon>
        <taxon>Aspergillus subgen. Nidulantes</taxon>
    </lineage>
</organism>